<proteinExistence type="inferred from homology"/>
<protein>
    <recommendedName>
        <fullName evidence="1">ATP synthase subunit b 1</fullName>
    </recommendedName>
    <alternativeName>
        <fullName evidence="1">ATP synthase F(0) sector subunit b 1</fullName>
    </alternativeName>
    <alternativeName>
        <fullName evidence="1">ATPase subunit I 1</fullName>
    </alternativeName>
    <alternativeName>
        <fullName evidence="1">F-type ATPase subunit b 1</fullName>
        <shortName evidence="1">F-ATPase subunit b 1</shortName>
    </alternativeName>
</protein>
<comment type="function">
    <text evidence="1">F(1)F(0) ATP synthase produces ATP from ADP in the presence of a proton or sodium gradient. F-type ATPases consist of two structural domains, F(1) containing the extramembraneous catalytic core and F(0) containing the membrane proton channel, linked together by a central stalk and a peripheral stalk. During catalysis, ATP synthesis in the catalytic domain of F(1) is coupled via a rotary mechanism of the central stalk subunits to proton translocation.</text>
</comment>
<comment type="function">
    <text evidence="1">Component of the F(0) channel, it forms part of the peripheral stalk, linking F(1) to F(0).</text>
</comment>
<comment type="subunit">
    <text evidence="1">F-type ATPases have 2 components, F(1) - the catalytic core - and F(0) - the membrane proton channel. F(1) has five subunits: alpha(3), beta(3), gamma(1), delta(1), epsilon(1). F(0) has three main subunits: a(1), b(2) and c(10-14). The alpha and beta chains form an alternating ring which encloses part of the gamma chain. F(1) is attached to F(0) by a central stalk formed by the gamma and epsilon chains, while a peripheral stalk is formed by the delta and b chains.</text>
</comment>
<comment type="subcellular location">
    <subcellularLocation>
        <location evidence="1">Cell inner membrane</location>
        <topology evidence="1">Single-pass membrane protein</topology>
    </subcellularLocation>
</comment>
<comment type="similarity">
    <text evidence="1">Belongs to the ATPase B chain family.</text>
</comment>
<sequence length="184" mass="19662">MKKLSILAVLAASPAMAATGPFLSLSNTNFIVTLAFLIFMGILLYAKVPGRVLGMLDKRSVQIRTELEEARALREEARTILASYDRKQKEVQEQAARIVASARDEAQAAAEQAKADLRASIARRLAAAEDQIASAEAGAVRAIREQAVSVAVAAAADLLSRQMTPAAASASIDESIKEVEARFH</sequence>
<organism>
    <name type="scientific">Cereibacter sphaeroides (strain ATCC 17029 / ATH 2.4.9)</name>
    <name type="common">Rhodobacter sphaeroides</name>
    <dbReference type="NCBI Taxonomy" id="349101"/>
    <lineage>
        <taxon>Bacteria</taxon>
        <taxon>Pseudomonadati</taxon>
        <taxon>Pseudomonadota</taxon>
        <taxon>Alphaproteobacteria</taxon>
        <taxon>Rhodobacterales</taxon>
        <taxon>Paracoccaceae</taxon>
        <taxon>Cereibacter</taxon>
    </lineage>
</organism>
<feature type="chain" id="PRO_5000227730" description="ATP synthase subunit b 1">
    <location>
        <begin position="1"/>
        <end position="184"/>
    </location>
</feature>
<feature type="transmembrane region" description="Helical" evidence="1">
    <location>
        <begin position="4"/>
        <end position="24"/>
    </location>
</feature>
<accession>A3PN82</accession>
<gene>
    <name evidence="1" type="primary">atpF1</name>
    <name type="ordered locus">Rsph17029_2696</name>
</gene>
<reference key="1">
    <citation type="submission" date="2007-02" db="EMBL/GenBank/DDBJ databases">
        <title>Complete sequence of chromosome 1 of Rhodobacter sphaeroides ATCC 17029.</title>
        <authorList>
            <person name="Copeland A."/>
            <person name="Lucas S."/>
            <person name="Lapidus A."/>
            <person name="Barry K."/>
            <person name="Detter J.C."/>
            <person name="Glavina del Rio T."/>
            <person name="Hammon N."/>
            <person name="Israni S."/>
            <person name="Dalin E."/>
            <person name="Tice H."/>
            <person name="Pitluck S."/>
            <person name="Kiss H."/>
            <person name="Brettin T."/>
            <person name="Bruce D."/>
            <person name="Han C."/>
            <person name="Tapia R."/>
            <person name="Gilna P."/>
            <person name="Schmutz J."/>
            <person name="Larimer F."/>
            <person name="Land M."/>
            <person name="Hauser L."/>
            <person name="Kyrpides N."/>
            <person name="Mikhailova N."/>
            <person name="Richardson P."/>
            <person name="Mackenzie C."/>
            <person name="Choudhary M."/>
            <person name="Donohue T.J."/>
            <person name="Kaplan S."/>
        </authorList>
    </citation>
    <scope>NUCLEOTIDE SEQUENCE [LARGE SCALE GENOMIC DNA]</scope>
    <source>
        <strain>ATCC 17029 / ATH 2.4.9</strain>
    </source>
</reference>
<name>ATPF1_CERS1</name>
<dbReference type="EMBL" id="CP000577">
    <property type="protein sequence ID" value="ABN77798.1"/>
    <property type="molecule type" value="Genomic_DNA"/>
</dbReference>
<dbReference type="RefSeq" id="WP_002721368.1">
    <property type="nucleotide sequence ID" value="NC_009049.1"/>
</dbReference>
<dbReference type="SMR" id="A3PN82"/>
<dbReference type="KEGG" id="rsh:Rsph17029_2696"/>
<dbReference type="HOGENOM" id="CLU_079215_6_2_5"/>
<dbReference type="GO" id="GO:0005886">
    <property type="term" value="C:plasma membrane"/>
    <property type="evidence" value="ECO:0007669"/>
    <property type="project" value="UniProtKB-SubCell"/>
</dbReference>
<dbReference type="GO" id="GO:0045259">
    <property type="term" value="C:proton-transporting ATP synthase complex"/>
    <property type="evidence" value="ECO:0007669"/>
    <property type="project" value="UniProtKB-KW"/>
</dbReference>
<dbReference type="GO" id="GO:0046933">
    <property type="term" value="F:proton-transporting ATP synthase activity, rotational mechanism"/>
    <property type="evidence" value="ECO:0007669"/>
    <property type="project" value="UniProtKB-UniRule"/>
</dbReference>
<dbReference type="GO" id="GO:0046961">
    <property type="term" value="F:proton-transporting ATPase activity, rotational mechanism"/>
    <property type="evidence" value="ECO:0007669"/>
    <property type="project" value="TreeGrafter"/>
</dbReference>
<dbReference type="CDD" id="cd06503">
    <property type="entry name" value="ATP-synt_Fo_b"/>
    <property type="match status" value="1"/>
</dbReference>
<dbReference type="HAMAP" id="MF_01398">
    <property type="entry name" value="ATP_synth_b_bprime"/>
    <property type="match status" value="1"/>
</dbReference>
<dbReference type="InterPro" id="IPR002146">
    <property type="entry name" value="ATP_synth_b/b'su_bac/chlpt"/>
</dbReference>
<dbReference type="InterPro" id="IPR050059">
    <property type="entry name" value="ATP_synthase_B_chain"/>
</dbReference>
<dbReference type="NCBIfam" id="NF009989">
    <property type="entry name" value="PRK13455.1"/>
    <property type="match status" value="1"/>
</dbReference>
<dbReference type="PANTHER" id="PTHR33445:SF1">
    <property type="entry name" value="ATP SYNTHASE SUBUNIT B"/>
    <property type="match status" value="1"/>
</dbReference>
<dbReference type="PANTHER" id="PTHR33445">
    <property type="entry name" value="ATP SYNTHASE SUBUNIT B', CHLOROPLASTIC"/>
    <property type="match status" value="1"/>
</dbReference>
<dbReference type="Pfam" id="PF00430">
    <property type="entry name" value="ATP-synt_B"/>
    <property type="match status" value="1"/>
</dbReference>
<keyword id="KW-0066">ATP synthesis</keyword>
<keyword id="KW-0997">Cell inner membrane</keyword>
<keyword id="KW-1003">Cell membrane</keyword>
<keyword id="KW-0138">CF(0)</keyword>
<keyword id="KW-0375">Hydrogen ion transport</keyword>
<keyword id="KW-0406">Ion transport</keyword>
<keyword id="KW-0472">Membrane</keyword>
<keyword id="KW-0812">Transmembrane</keyword>
<keyword id="KW-1133">Transmembrane helix</keyword>
<keyword id="KW-0813">Transport</keyword>
<evidence type="ECO:0000255" key="1">
    <source>
        <dbReference type="HAMAP-Rule" id="MF_01398"/>
    </source>
</evidence>